<evidence type="ECO:0000250" key="1"/>
<evidence type="ECO:0000250" key="2">
    <source>
        <dbReference type="UniProtKB" id="Q6UXY1"/>
    </source>
</evidence>
<evidence type="ECO:0000255" key="3">
    <source>
        <dbReference type="PROSITE-ProRule" id="PRU00192"/>
    </source>
</evidence>
<evidence type="ECO:0000255" key="4">
    <source>
        <dbReference type="PROSITE-ProRule" id="PRU00668"/>
    </source>
</evidence>
<evidence type="ECO:0000256" key="5">
    <source>
        <dbReference type="SAM" id="MobiDB-lite"/>
    </source>
</evidence>
<evidence type="ECO:0000269" key="6">
    <source>
    </source>
</evidence>
<evidence type="ECO:0000303" key="7">
    <source>
    </source>
</evidence>
<evidence type="ECO:0007744" key="8">
    <source>
    </source>
</evidence>
<evidence type="ECO:0007829" key="9">
    <source>
        <dbReference type="PDB" id="3OK8"/>
    </source>
</evidence>
<keyword id="KW-0002">3D-structure</keyword>
<keyword id="KW-0025">Alternative splicing</keyword>
<keyword id="KW-0965">Cell junction</keyword>
<keyword id="KW-1003">Cell membrane</keyword>
<keyword id="KW-0968">Cytoplasmic vesicle</keyword>
<keyword id="KW-0446">Lipid-binding</keyword>
<keyword id="KW-0472">Membrane</keyword>
<keyword id="KW-0597">Phosphoprotein</keyword>
<keyword id="KW-1185">Reference proteome</keyword>
<keyword id="KW-0728">SH3 domain</keyword>
<accession>Q80Y61</accession>
<accession>Q3UP58</accession>
<proteinExistence type="evidence at protein level"/>
<protein>
    <recommendedName>
        <fullName evidence="2">BAR/IMD domain-containing adapter protein 2-like 2</fullName>
    </recommendedName>
    <alternativeName>
        <fullName>Brain-specific angiogenesis inhibitor 1-associated protein 2-like protein 2</fullName>
        <shortName>BAI1-associated protein 2-like protein 2</shortName>
    </alternativeName>
    <alternativeName>
        <fullName>Planar intestinal- and kidney-specific BAR domain protein</fullName>
        <shortName>Pinkbar</shortName>
    </alternativeName>
</protein>
<sequence>MAPEMDQFYRSTMAIYKSIMEQFNPALENLVYLGNNYLRAFHALSEAAEVYFSAIQKIGEQALQSSTSQILGEILVQMSDTQRHLNSDLEVVVQTFHGDLLQHMEKNTKLDMQFIKDSCQHYEIEYRHRAANLEKCMSELWRMERKRDKNAREMKESVNRLHAQMQAFVSESKRAAELEEKRRYRFLAEKHLLLSNTFLQFLGRARGMLQNRVLLWKEQSEASRSPSRAHSPGLLGPALGPPYPSGRLTPTRLDMPPRPLGEYGSPRSRHGSGSYGPEPAEARSASQLEPDRRSLPRTPSASSLYASSTQRSRSNSFGERLGGGGARRVRALVSHSEGANHTLLRFSAGDVVEVLVPEAQNGWLYGKLEGSSASGWFPEAYVKPVEEIPVNPMNPVAPMNSMAPMSPMNELPSRSYPLRGSHSLDDLLDRPGNPTASSEYWDSQSRSRTPSRVPSRAPSPAPPPLPSSRRSSVGSMGAATDVKKLMSWEQNPPELFPRGTNPFATVKLRPTVTNDRSAPLIR</sequence>
<dbReference type="EMBL" id="AK143783">
    <property type="protein sequence ID" value="BAE25539.1"/>
    <property type="molecule type" value="mRNA"/>
</dbReference>
<dbReference type="EMBL" id="AL591913">
    <property type="status" value="NOT_ANNOTATED_CDS"/>
    <property type="molecule type" value="Genomic_DNA"/>
</dbReference>
<dbReference type="EMBL" id="CH466550">
    <property type="protein sequence ID" value="EDL04661.1"/>
    <property type="molecule type" value="Genomic_DNA"/>
</dbReference>
<dbReference type="EMBL" id="BC048937">
    <property type="protein sequence ID" value="AAH48937.1"/>
    <property type="molecule type" value="mRNA"/>
</dbReference>
<dbReference type="CCDS" id="CCDS37140.1">
    <molecule id="Q80Y61-1"/>
</dbReference>
<dbReference type="RefSeq" id="NP_808248.1">
    <molecule id="Q80Y61-1"/>
    <property type="nucleotide sequence ID" value="NM_177580.3"/>
</dbReference>
<dbReference type="PDB" id="3OK8">
    <property type="method" value="X-ray"/>
    <property type="resolution" value="2.25 A"/>
    <property type="chains" value="A/B=1-220"/>
</dbReference>
<dbReference type="PDBsum" id="3OK8"/>
<dbReference type="SMR" id="Q80Y61"/>
<dbReference type="DIP" id="DIP-59098N"/>
<dbReference type="FunCoup" id="Q80Y61">
    <property type="interactions" value="26"/>
</dbReference>
<dbReference type="STRING" id="10090.ENSMUSP00000127816"/>
<dbReference type="iPTMnet" id="Q80Y61"/>
<dbReference type="PhosphoSitePlus" id="Q80Y61"/>
<dbReference type="PaxDb" id="10090-ENSMUSP00000127816"/>
<dbReference type="PeptideAtlas" id="Q80Y61"/>
<dbReference type="ProteomicsDB" id="265213">
    <molecule id="Q80Y61-1"/>
</dbReference>
<dbReference type="ProteomicsDB" id="265214">
    <molecule id="Q80Y61-2"/>
</dbReference>
<dbReference type="Antibodypedia" id="301">
    <property type="antibodies" value="136 antibodies from 25 providers"/>
</dbReference>
<dbReference type="DNASU" id="207495"/>
<dbReference type="Ensembl" id="ENSMUST00000165408.8">
    <molecule id="Q80Y61-1"/>
    <property type="protein sequence ID" value="ENSMUSP00000127816.2"/>
    <property type="gene ID" value="ENSMUSG00000018126.16"/>
</dbReference>
<dbReference type="Ensembl" id="ENSMUST00000170955.2">
    <molecule id="Q80Y61-2"/>
    <property type="protein sequence ID" value="ENSMUSP00000125946.2"/>
    <property type="gene ID" value="ENSMUSG00000018126.16"/>
</dbReference>
<dbReference type="GeneID" id="207495"/>
<dbReference type="KEGG" id="mmu:207495"/>
<dbReference type="UCSC" id="uc007wtb.1">
    <molecule id="Q80Y61-1"/>
    <property type="organism name" value="mouse"/>
</dbReference>
<dbReference type="UCSC" id="uc007wtc.1">
    <molecule id="Q80Y61-2"/>
    <property type="organism name" value="mouse"/>
</dbReference>
<dbReference type="AGR" id="MGI:2652819"/>
<dbReference type="CTD" id="80115"/>
<dbReference type="MGI" id="MGI:2652819">
    <property type="gene designation" value="Baiap2l2"/>
</dbReference>
<dbReference type="VEuPathDB" id="HostDB:ENSMUSG00000018126"/>
<dbReference type="eggNOG" id="ENOG502QW6V">
    <property type="taxonomic scope" value="Eukaryota"/>
</dbReference>
<dbReference type="GeneTree" id="ENSGT00940000153560"/>
<dbReference type="HOGENOM" id="CLU_025877_1_1_1"/>
<dbReference type="InParanoid" id="Q80Y61"/>
<dbReference type="OMA" id="QNLMEHF"/>
<dbReference type="OrthoDB" id="9944156at2759"/>
<dbReference type="PhylomeDB" id="Q80Y61"/>
<dbReference type="TreeFam" id="TF325648"/>
<dbReference type="Reactome" id="R-MMU-9035034">
    <property type="pathway name" value="RHOF GTPase cycle"/>
</dbReference>
<dbReference type="BioGRID-ORCS" id="207495">
    <property type="hits" value="1 hit in 78 CRISPR screens"/>
</dbReference>
<dbReference type="ChiTaRS" id="Baiap2l2">
    <property type="organism name" value="mouse"/>
</dbReference>
<dbReference type="EvolutionaryTrace" id="Q80Y61"/>
<dbReference type="PRO" id="PR:Q80Y61"/>
<dbReference type="Proteomes" id="UP000000589">
    <property type="component" value="Chromosome 15"/>
</dbReference>
<dbReference type="RNAct" id="Q80Y61">
    <property type="molecule type" value="protein"/>
</dbReference>
<dbReference type="Bgee" id="ENSMUSG00000018126">
    <property type="expression patterns" value="Expressed in jejunum and 57 other cell types or tissues"/>
</dbReference>
<dbReference type="GO" id="GO:0044291">
    <property type="term" value="C:cell-cell contact zone"/>
    <property type="evidence" value="ECO:0000250"/>
    <property type="project" value="UniProtKB"/>
</dbReference>
<dbReference type="GO" id="GO:0071439">
    <property type="term" value="C:clathrin complex"/>
    <property type="evidence" value="ECO:0007669"/>
    <property type="project" value="Ensembl"/>
</dbReference>
<dbReference type="GO" id="GO:0030659">
    <property type="term" value="C:cytoplasmic vesicle membrane"/>
    <property type="evidence" value="ECO:0007669"/>
    <property type="project" value="UniProtKB-SubCell"/>
</dbReference>
<dbReference type="GO" id="GO:0005886">
    <property type="term" value="C:plasma membrane"/>
    <property type="evidence" value="ECO:0007669"/>
    <property type="project" value="UniProtKB-SubCell"/>
</dbReference>
<dbReference type="GO" id="GO:0012506">
    <property type="term" value="C:vesicle membrane"/>
    <property type="evidence" value="ECO:0000250"/>
    <property type="project" value="UniProtKB"/>
</dbReference>
<dbReference type="GO" id="GO:0042802">
    <property type="term" value="F:identical protein binding"/>
    <property type="evidence" value="ECO:0000353"/>
    <property type="project" value="IntAct"/>
</dbReference>
<dbReference type="GO" id="GO:0005543">
    <property type="term" value="F:phospholipid binding"/>
    <property type="evidence" value="ECO:0000314"/>
    <property type="project" value="UniProtKB"/>
</dbReference>
<dbReference type="GO" id="GO:0061024">
    <property type="term" value="P:membrane organization"/>
    <property type="evidence" value="ECO:0000314"/>
    <property type="project" value="UniProtKB"/>
</dbReference>
<dbReference type="GO" id="GO:0007009">
    <property type="term" value="P:plasma membrane organization"/>
    <property type="evidence" value="ECO:0007669"/>
    <property type="project" value="InterPro"/>
</dbReference>
<dbReference type="CDD" id="cd07644">
    <property type="entry name" value="I-BAR_IMD_BAIAP2L2"/>
    <property type="match status" value="1"/>
</dbReference>
<dbReference type="CDD" id="cd11914">
    <property type="entry name" value="SH3_BAIAP2L2"/>
    <property type="match status" value="1"/>
</dbReference>
<dbReference type="FunFam" id="1.20.1270.60:FF:000056">
    <property type="entry name" value="brain-specific angiogenesis inhibitor 1-associated protein 2-like protein 2"/>
    <property type="match status" value="1"/>
</dbReference>
<dbReference type="FunFam" id="2.30.30.40:FF:000185">
    <property type="entry name" value="brain-specific angiogenesis inhibitor 1-associated protein 2-like protein 2"/>
    <property type="match status" value="1"/>
</dbReference>
<dbReference type="Gene3D" id="1.20.1270.60">
    <property type="entry name" value="Arfaptin homology (AH) domain/BAR domain"/>
    <property type="match status" value="1"/>
</dbReference>
<dbReference type="Gene3D" id="2.30.30.40">
    <property type="entry name" value="SH3 Domains"/>
    <property type="match status" value="1"/>
</dbReference>
<dbReference type="InterPro" id="IPR027267">
    <property type="entry name" value="AH/BAR_dom_sf"/>
</dbReference>
<dbReference type="InterPro" id="IPR030126">
    <property type="entry name" value="Baiap2l2_I-BAR_dom"/>
</dbReference>
<dbReference type="InterPro" id="IPR013606">
    <property type="entry name" value="I-BAR_dom"/>
</dbReference>
<dbReference type="InterPro" id="IPR027681">
    <property type="entry name" value="IRSp53/IRTKS/Pinkbar"/>
</dbReference>
<dbReference type="InterPro" id="IPR035593">
    <property type="entry name" value="Pinkbar_SH3"/>
</dbReference>
<dbReference type="InterPro" id="IPR036028">
    <property type="entry name" value="SH3-like_dom_sf"/>
</dbReference>
<dbReference type="InterPro" id="IPR001452">
    <property type="entry name" value="SH3_domain"/>
</dbReference>
<dbReference type="PANTHER" id="PTHR14206">
    <property type="entry name" value="BRAIN-SPECIFIC ANGIOGENESIS INHIBITOR 1-ASSOCIATED PROTEIN 2"/>
    <property type="match status" value="1"/>
</dbReference>
<dbReference type="PANTHER" id="PTHR14206:SF5">
    <property type="entry name" value="BRAIN-SPECIFIC ANGIOGENESIS INHIBITOR 1-ASSOCIATED PROTEIN 2-LIKE PROTEIN 2"/>
    <property type="match status" value="1"/>
</dbReference>
<dbReference type="Pfam" id="PF08397">
    <property type="entry name" value="IMD"/>
    <property type="match status" value="1"/>
</dbReference>
<dbReference type="Pfam" id="PF14604">
    <property type="entry name" value="SH3_9"/>
    <property type="match status" value="1"/>
</dbReference>
<dbReference type="SMART" id="SM00326">
    <property type="entry name" value="SH3"/>
    <property type="match status" value="1"/>
</dbReference>
<dbReference type="SUPFAM" id="SSF103657">
    <property type="entry name" value="BAR/IMD domain-like"/>
    <property type="match status" value="1"/>
</dbReference>
<dbReference type="SUPFAM" id="SSF50044">
    <property type="entry name" value="SH3-domain"/>
    <property type="match status" value="1"/>
</dbReference>
<dbReference type="PROSITE" id="PS51338">
    <property type="entry name" value="IMD"/>
    <property type="match status" value="1"/>
</dbReference>
<dbReference type="PROSITE" id="PS50002">
    <property type="entry name" value="SH3"/>
    <property type="match status" value="1"/>
</dbReference>
<gene>
    <name type="primary">Baiap2l2</name>
</gene>
<reference key="1">
    <citation type="journal article" date="2005" name="Science">
        <title>The transcriptional landscape of the mammalian genome.</title>
        <authorList>
            <person name="Carninci P."/>
            <person name="Kasukawa T."/>
            <person name="Katayama S."/>
            <person name="Gough J."/>
            <person name="Frith M.C."/>
            <person name="Maeda N."/>
            <person name="Oyama R."/>
            <person name="Ravasi T."/>
            <person name="Lenhard B."/>
            <person name="Wells C."/>
            <person name="Kodzius R."/>
            <person name="Shimokawa K."/>
            <person name="Bajic V.B."/>
            <person name="Brenner S.E."/>
            <person name="Batalov S."/>
            <person name="Forrest A.R."/>
            <person name="Zavolan M."/>
            <person name="Davis M.J."/>
            <person name="Wilming L.G."/>
            <person name="Aidinis V."/>
            <person name="Allen J.E."/>
            <person name="Ambesi-Impiombato A."/>
            <person name="Apweiler R."/>
            <person name="Aturaliya R.N."/>
            <person name="Bailey T.L."/>
            <person name="Bansal M."/>
            <person name="Baxter L."/>
            <person name="Beisel K.W."/>
            <person name="Bersano T."/>
            <person name="Bono H."/>
            <person name="Chalk A.M."/>
            <person name="Chiu K.P."/>
            <person name="Choudhary V."/>
            <person name="Christoffels A."/>
            <person name="Clutterbuck D.R."/>
            <person name="Crowe M.L."/>
            <person name="Dalla E."/>
            <person name="Dalrymple B.P."/>
            <person name="de Bono B."/>
            <person name="Della Gatta G."/>
            <person name="di Bernardo D."/>
            <person name="Down T."/>
            <person name="Engstrom P."/>
            <person name="Fagiolini M."/>
            <person name="Faulkner G."/>
            <person name="Fletcher C.F."/>
            <person name="Fukushima T."/>
            <person name="Furuno M."/>
            <person name="Futaki S."/>
            <person name="Gariboldi M."/>
            <person name="Georgii-Hemming P."/>
            <person name="Gingeras T.R."/>
            <person name="Gojobori T."/>
            <person name="Green R.E."/>
            <person name="Gustincich S."/>
            <person name="Harbers M."/>
            <person name="Hayashi Y."/>
            <person name="Hensch T.K."/>
            <person name="Hirokawa N."/>
            <person name="Hill D."/>
            <person name="Huminiecki L."/>
            <person name="Iacono M."/>
            <person name="Ikeo K."/>
            <person name="Iwama A."/>
            <person name="Ishikawa T."/>
            <person name="Jakt M."/>
            <person name="Kanapin A."/>
            <person name="Katoh M."/>
            <person name="Kawasawa Y."/>
            <person name="Kelso J."/>
            <person name="Kitamura H."/>
            <person name="Kitano H."/>
            <person name="Kollias G."/>
            <person name="Krishnan S.P."/>
            <person name="Kruger A."/>
            <person name="Kummerfeld S.K."/>
            <person name="Kurochkin I.V."/>
            <person name="Lareau L.F."/>
            <person name="Lazarevic D."/>
            <person name="Lipovich L."/>
            <person name="Liu J."/>
            <person name="Liuni S."/>
            <person name="McWilliam S."/>
            <person name="Madan Babu M."/>
            <person name="Madera M."/>
            <person name="Marchionni L."/>
            <person name="Matsuda H."/>
            <person name="Matsuzawa S."/>
            <person name="Miki H."/>
            <person name="Mignone F."/>
            <person name="Miyake S."/>
            <person name="Morris K."/>
            <person name="Mottagui-Tabar S."/>
            <person name="Mulder N."/>
            <person name="Nakano N."/>
            <person name="Nakauchi H."/>
            <person name="Ng P."/>
            <person name="Nilsson R."/>
            <person name="Nishiguchi S."/>
            <person name="Nishikawa S."/>
            <person name="Nori F."/>
            <person name="Ohara O."/>
            <person name="Okazaki Y."/>
            <person name="Orlando V."/>
            <person name="Pang K.C."/>
            <person name="Pavan W.J."/>
            <person name="Pavesi G."/>
            <person name="Pesole G."/>
            <person name="Petrovsky N."/>
            <person name="Piazza S."/>
            <person name="Reed J."/>
            <person name="Reid J.F."/>
            <person name="Ring B.Z."/>
            <person name="Ringwald M."/>
            <person name="Rost B."/>
            <person name="Ruan Y."/>
            <person name="Salzberg S.L."/>
            <person name="Sandelin A."/>
            <person name="Schneider C."/>
            <person name="Schoenbach C."/>
            <person name="Sekiguchi K."/>
            <person name="Semple C.A."/>
            <person name="Seno S."/>
            <person name="Sessa L."/>
            <person name="Sheng Y."/>
            <person name="Shibata Y."/>
            <person name="Shimada H."/>
            <person name="Shimada K."/>
            <person name="Silva D."/>
            <person name="Sinclair B."/>
            <person name="Sperling S."/>
            <person name="Stupka E."/>
            <person name="Sugiura K."/>
            <person name="Sultana R."/>
            <person name="Takenaka Y."/>
            <person name="Taki K."/>
            <person name="Tammoja K."/>
            <person name="Tan S.L."/>
            <person name="Tang S."/>
            <person name="Taylor M.S."/>
            <person name="Tegner J."/>
            <person name="Teichmann S.A."/>
            <person name="Ueda H.R."/>
            <person name="van Nimwegen E."/>
            <person name="Verardo R."/>
            <person name="Wei C.L."/>
            <person name="Yagi K."/>
            <person name="Yamanishi H."/>
            <person name="Zabarovsky E."/>
            <person name="Zhu S."/>
            <person name="Zimmer A."/>
            <person name="Hide W."/>
            <person name="Bult C."/>
            <person name="Grimmond S.M."/>
            <person name="Teasdale R.D."/>
            <person name="Liu E.T."/>
            <person name="Brusic V."/>
            <person name="Quackenbush J."/>
            <person name="Wahlestedt C."/>
            <person name="Mattick J.S."/>
            <person name="Hume D.A."/>
            <person name="Kai C."/>
            <person name="Sasaki D."/>
            <person name="Tomaru Y."/>
            <person name="Fukuda S."/>
            <person name="Kanamori-Katayama M."/>
            <person name="Suzuki M."/>
            <person name="Aoki J."/>
            <person name="Arakawa T."/>
            <person name="Iida J."/>
            <person name="Imamura K."/>
            <person name="Itoh M."/>
            <person name="Kato T."/>
            <person name="Kawaji H."/>
            <person name="Kawagashira N."/>
            <person name="Kawashima T."/>
            <person name="Kojima M."/>
            <person name="Kondo S."/>
            <person name="Konno H."/>
            <person name="Nakano K."/>
            <person name="Ninomiya N."/>
            <person name="Nishio T."/>
            <person name="Okada M."/>
            <person name="Plessy C."/>
            <person name="Shibata K."/>
            <person name="Shiraki T."/>
            <person name="Suzuki S."/>
            <person name="Tagami M."/>
            <person name="Waki K."/>
            <person name="Watahiki A."/>
            <person name="Okamura-Oho Y."/>
            <person name="Suzuki H."/>
            <person name="Kawai J."/>
            <person name="Hayashizaki Y."/>
        </authorList>
    </citation>
    <scope>NUCLEOTIDE SEQUENCE [LARGE SCALE MRNA] (ISOFORM 2)</scope>
    <source>
        <strain>C57BL/6J</strain>
        <tissue>Spleen</tissue>
    </source>
</reference>
<reference key="2">
    <citation type="journal article" date="2009" name="PLoS Biol.">
        <title>Lineage-specific biology revealed by a finished genome assembly of the mouse.</title>
        <authorList>
            <person name="Church D.M."/>
            <person name="Goodstadt L."/>
            <person name="Hillier L.W."/>
            <person name="Zody M.C."/>
            <person name="Goldstein S."/>
            <person name="She X."/>
            <person name="Bult C.J."/>
            <person name="Agarwala R."/>
            <person name="Cherry J.L."/>
            <person name="DiCuccio M."/>
            <person name="Hlavina W."/>
            <person name="Kapustin Y."/>
            <person name="Meric P."/>
            <person name="Maglott D."/>
            <person name="Birtle Z."/>
            <person name="Marques A.C."/>
            <person name="Graves T."/>
            <person name="Zhou S."/>
            <person name="Teague B."/>
            <person name="Potamousis K."/>
            <person name="Churas C."/>
            <person name="Place M."/>
            <person name="Herschleb J."/>
            <person name="Runnheim R."/>
            <person name="Forrest D."/>
            <person name="Amos-Landgraf J."/>
            <person name="Schwartz D.C."/>
            <person name="Cheng Z."/>
            <person name="Lindblad-Toh K."/>
            <person name="Eichler E.E."/>
            <person name="Ponting C.P."/>
        </authorList>
    </citation>
    <scope>NUCLEOTIDE SEQUENCE [LARGE SCALE GENOMIC DNA]</scope>
    <source>
        <strain>C57BL/6J</strain>
    </source>
</reference>
<reference key="3">
    <citation type="submission" date="2005-09" db="EMBL/GenBank/DDBJ databases">
        <authorList>
            <person name="Mural R.J."/>
            <person name="Adams M.D."/>
            <person name="Myers E.W."/>
            <person name="Smith H.O."/>
            <person name="Venter J.C."/>
        </authorList>
    </citation>
    <scope>NUCLEOTIDE SEQUENCE [LARGE SCALE GENOMIC DNA]</scope>
</reference>
<reference key="4">
    <citation type="journal article" date="2004" name="Genome Res.">
        <title>The status, quality, and expansion of the NIH full-length cDNA project: the Mammalian Gene Collection (MGC).</title>
        <authorList>
            <consortium name="The MGC Project Team"/>
        </authorList>
    </citation>
    <scope>NUCLEOTIDE SEQUENCE [LARGE SCALE MRNA] (ISOFORM 1)</scope>
    <source>
        <strain>FVB/N</strain>
        <tissue>Colon</tissue>
    </source>
</reference>
<reference key="5">
    <citation type="journal article" date="2010" name="Cell">
        <title>A tissue-specific atlas of mouse protein phosphorylation and expression.</title>
        <authorList>
            <person name="Huttlin E.L."/>
            <person name="Jedrychowski M.P."/>
            <person name="Elias J.E."/>
            <person name="Goswami T."/>
            <person name="Rad R."/>
            <person name="Beausoleil S.A."/>
            <person name="Villen J."/>
            <person name="Haas W."/>
            <person name="Sowa M.E."/>
            <person name="Gygi S.P."/>
        </authorList>
    </citation>
    <scope>PHOSPHORYLATION [LARGE SCALE ANALYSIS] AT SER-231; SER-272; SER-303; SER-472 AND SER-475</scope>
    <scope>IDENTIFICATION BY MASS SPECTROMETRY [LARGE SCALE ANALYSIS]</scope>
    <source>
        <tissue>Brain</tissue>
        <tissue>Kidney</tissue>
    </source>
</reference>
<reference key="6">
    <citation type="journal article" date="2011" name="Nat. Struct. Mol. Biol.">
        <title>Pinkbar is an epithelial-specific BAR domain protein that generates planar membrane structures.</title>
        <authorList>
            <person name="Pykalainen A."/>
            <person name="Boczkowska M."/>
            <person name="Zhao H."/>
            <person name="Saarikangas J."/>
            <person name="Rebowski G."/>
            <person name="Jansen M."/>
            <person name="Hakanen J."/>
            <person name="Koskela E.V."/>
            <person name="Peranen J."/>
            <person name="Vihinen H."/>
            <person name="Jokitalo E."/>
            <person name="Salminen M."/>
            <person name="Ikonen E."/>
            <person name="Dominguez R."/>
            <person name="Lappalainen P."/>
        </authorList>
    </citation>
    <scope>X-RAY CRYSTALLOGRAPHY (2.25 ANGSTROMS) OF 1-220</scope>
    <scope>FUNCTION</scope>
    <scope>TISSUE SPECIFICITY</scope>
    <scope>PHOSPHOINOSITIDES-BINDING</scope>
    <scope>MUTAGENESIS OF LYS-109; LYS-116; ILE-124; ARG-127; LYS-135; TRP-141; ARG-145; LYS-146; ARG-147; LYS-149; ARG-152; LYS-155 AND LEU-214</scope>
</reference>
<feature type="chain" id="PRO_0000256131" description="BAR/IMD domain-containing adapter protein 2-like 2">
    <location>
        <begin position="1"/>
        <end position="522"/>
    </location>
</feature>
<feature type="domain" description="IMD" evidence="4">
    <location>
        <begin position="1"/>
        <end position="239"/>
    </location>
</feature>
<feature type="domain" description="SH3" evidence="3">
    <location>
        <begin position="324"/>
        <end position="387"/>
    </location>
</feature>
<feature type="region of interest" description="Disordered" evidence="5">
    <location>
        <begin position="220"/>
        <end position="325"/>
    </location>
</feature>
<feature type="region of interest" description="Disordered" evidence="5">
    <location>
        <begin position="404"/>
        <end position="502"/>
    </location>
</feature>
<feature type="compositionally biased region" description="Polar residues" evidence="5">
    <location>
        <begin position="297"/>
        <end position="317"/>
    </location>
</feature>
<feature type="compositionally biased region" description="Low complexity" evidence="5">
    <location>
        <begin position="443"/>
        <end position="456"/>
    </location>
</feature>
<feature type="compositionally biased region" description="Pro residues" evidence="5">
    <location>
        <begin position="457"/>
        <end position="466"/>
    </location>
</feature>
<feature type="modified residue" description="Phosphoserine" evidence="8">
    <location>
        <position position="231"/>
    </location>
</feature>
<feature type="modified residue" description="Phosphoserine" evidence="8">
    <location>
        <position position="272"/>
    </location>
</feature>
<feature type="modified residue" description="Phosphoserine" evidence="8">
    <location>
        <position position="303"/>
    </location>
</feature>
<feature type="modified residue" description="Phosphoserine" evidence="8">
    <location>
        <position position="472"/>
    </location>
</feature>
<feature type="modified residue" description="Phosphoserine" evidence="8">
    <location>
        <position position="475"/>
    </location>
</feature>
<feature type="splice variant" id="VSP_021325" description="In isoform 2." evidence="7">
    <original>ARGMLQNRVLLWKEQSEASRSPSRAHSPGLLGPA</original>
    <variation>VSRAGESKPRPPGAVVRLRRTQEQERSFLPLCFL</variation>
    <location>
        <begin position="205"/>
        <end position="238"/>
    </location>
</feature>
<feature type="splice variant" id="VSP_021326" description="In isoform 2." evidence="7">
    <location>
        <begin position="239"/>
        <end position="522"/>
    </location>
</feature>
<feature type="mutagenesis site" description="Impairs lipid-binding activity and hence PtdIns(4,5)P2 clustering; when associated with A-116." evidence="6">
    <original>K</original>
    <variation>A</variation>
    <location>
        <position position="109"/>
    </location>
</feature>
<feature type="mutagenesis site" description="Impairs lipid-binding activity and hence PtdIns(4,5)P2 clustering; when associated with A-109." evidence="6">
    <original>K</original>
    <variation>A</variation>
    <location>
        <position position="116"/>
    </location>
</feature>
<feature type="mutagenesis site" description="Partially impairs lipid-binding activity and hence PtdIns(4,5)P2 clustering." evidence="6">
    <original>I</original>
    <variation>S</variation>
    <location>
        <position position="124"/>
    </location>
</feature>
<feature type="mutagenesis site" description="Impairs lipid-binding activity and hence PtdIns(4,5)P2 clustering; when associated with A-135." evidence="6">
    <original>R</original>
    <variation>A</variation>
    <location>
        <position position="127"/>
    </location>
</feature>
<feature type="mutagenesis site" description="Impairs lipid-binding activity and hence PtdIns(4,5)P2 clustering; when associated with A-127." evidence="6">
    <original>K</original>
    <variation>A</variation>
    <location>
        <position position="135"/>
    </location>
</feature>
<feature type="mutagenesis site" description="Deficient in oligomerization (dimerization maintained). Inefficient formation of planar membrane structures. No effect on lipid-binding." evidence="6">
    <original>W</original>
    <variation>S</variation>
    <location>
        <position position="141"/>
    </location>
</feature>
<feature type="mutagenesis site" description="Impairs lipid-binding activity and hence PtdIns(4,5)P2 clustering; when associated with A-146 and A-147." evidence="6">
    <original>R</original>
    <variation>A</variation>
    <location>
        <position position="145"/>
    </location>
</feature>
<feature type="mutagenesis site" description="Impairs lipid-binding activity and hence PtdIns(4,5)P2 clustering; when associated with A-145 and A-147." evidence="6">
    <original>K</original>
    <variation>A</variation>
    <location>
        <position position="146"/>
    </location>
</feature>
<feature type="mutagenesis site" description="Impairs lipid-binding activity and hence PtdIns(4,5)P2 clustering; when associated with A-145 and A-146." evidence="6">
    <original>R</original>
    <variation>A</variation>
    <location>
        <position position="147"/>
    </location>
</feature>
<feature type="mutagenesis site" description="No effect on lipid-binding; when associated with A-152 and A-155." evidence="6">
    <original>K</original>
    <variation>A</variation>
    <location>
        <position position="149"/>
    </location>
</feature>
<feature type="mutagenesis site" description="No effect on lipid-binding; when associated with A-149 and A-155." evidence="6">
    <original>R</original>
    <variation>A</variation>
    <location>
        <position position="152"/>
    </location>
</feature>
<feature type="mutagenesis site" description="No effect on lipid-binding; when associated with A-149 and A-152." evidence="6">
    <original>K</original>
    <variation>A</variation>
    <location>
        <position position="155"/>
    </location>
</feature>
<feature type="mutagenesis site" description="No effect on lipid-binding." evidence="6">
    <original>L</original>
    <variation>S</variation>
    <location>
        <position position="214"/>
    </location>
</feature>
<feature type="helix" evidence="9">
    <location>
        <begin position="3"/>
        <end position="21"/>
    </location>
</feature>
<feature type="helix" evidence="9">
    <location>
        <begin position="23"/>
        <end position="64"/>
    </location>
</feature>
<feature type="strand" evidence="9">
    <location>
        <begin position="65"/>
        <end position="67"/>
    </location>
</feature>
<feature type="helix" evidence="9">
    <location>
        <begin position="69"/>
        <end position="99"/>
    </location>
</feature>
<feature type="helix" evidence="9">
    <location>
        <begin position="101"/>
        <end position="145"/>
    </location>
</feature>
<feature type="helix" evidence="9">
    <location>
        <begin position="151"/>
        <end position="215"/>
    </location>
</feature>
<name>BI2L2_MOUSE</name>
<organism>
    <name type="scientific">Mus musculus</name>
    <name type="common">Mouse</name>
    <dbReference type="NCBI Taxonomy" id="10090"/>
    <lineage>
        <taxon>Eukaryota</taxon>
        <taxon>Metazoa</taxon>
        <taxon>Chordata</taxon>
        <taxon>Craniata</taxon>
        <taxon>Vertebrata</taxon>
        <taxon>Euteleostomi</taxon>
        <taxon>Mammalia</taxon>
        <taxon>Eutheria</taxon>
        <taxon>Euarchontoglires</taxon>
        <taxon>Glires</taxon>
        <taxon>Rodentia</taxon>
        <taxon>Myomorpha</taxon>
        <taxon>Muroidea</taxon>
        <taxon>Muridae</taxon>
        <taxon>Murinae</taxon>
        <taxon>Mus</taxon>
        <taxon>Mus</taxon>
    </lineage>
</organism>
<comment type="function">
    <text evidence="6">Phosphoinositides-binding protein that induces the formation of planar or gently curved membrane structures. Binds to phosphoinositides, including to phosphatidylinositol 4,5-bisphosphate (PtdIns(4,5)P2) headgroups. There seems to be no clear preference for a specific phosphoinositide.</text>
</comment>
<comment type="interaction">
    <interactant intactId="EBI-15935597">
        <id>Q80Y61-1</id>
    </interactant>
    <interactant intactId="EBI-15935597">
        <id>Q80Y61-1</id>
        <label>Baiap2l2</label>
    </interactant>
    <organismsDiffer>false</organismsDiffer>
    <experiments>3</experiments>
</comment>
<comment type="subcellular location">
    <subcellularLocation>
        <location evidence="1">Cell membrane</location>
        <topology evidence="1">Peripheral membrane protein</topology>
    </subcellularLocation>
    <subcellularLocation>
        <location evidence="1">Cell junction</location>
    </subcellularLocation>
    <subcellularLocation>
        <location evidence="1">Cytoplasmic vesicle membrane</location>
    </subcellularLocation>
    <text evidence="1">Localizes to RAB13-positive vesicles and to the plasma membrane at intercellular contacts.</text>
</comment>
<comment type="alternative products">
    <event type="alternative splicing"/>
    <isoform>
        <id>Q80Y61-1</id>
        <name>1</name>
        <sequence type="displayed"/>
    </isoform>
    <isoform>
        <id>Q80Y61-2</id>
        <name>2</name>
        <sequence type="described" ref="VSP_021325 VSP_021326"/>
    </isoform>
</comment>
<comment type="tissue specificity">
    <text evidence="6">Expressed in the epithelial layer of the intestine and in the kidney.</text>
</comment>
<comment type="domain">
    <text>The IMD domain consisting of an antiparallel dimer of three-helix bundles, featuring on one side a positively charged. The N-terminal alpha-helix inserts into the lipid bilayer. Also forms homodimers and homooligomers. The residue Trp-141 is essential for oligomer formation.</text>
</comment>